<protein>
    <recommendedName>
        <fullName evidence="1">Ribosomal protein uS12 methylthiotransferase RimO</fullName>
        <shortName evidence="1">uS12 MTTase</shortName>
        <shortName evidence="1">uS12 methylthiotransferase</shortName>
        <ecNumber evidence="1">2.8.4.4</ecNumber>
    </recommendedName>
    <alternativeName>
        <fullName evidence="1">Ribosomal protein uS12 (aspartate-C(3))-methylthiotransferase</fullName>
    </alternativeName>
    <alternativeName>
        <fullName evidence="1">Ribosome maturation factor RimO</fullName>
    </alternativeName>
</protein>
<comment type="function">
    <text evidence="1">Catalyzes the methylthiolation of an aspartic acid residue of ribosomal protein uS12.</text>
</comment>
<comment type="catalytic activity">
    <reaction evidence="1">
        <text>L-aspartate(89)-[ribosomal protein uS12]-hydrogen + (sulfur carrier)-SH + AH2 + 2 S-adenosyl-L-methionine = 3-methylsulfanyl-L-aspartate(89)-[ribosomal protein uS12]-hydrogen + (sulfur carrier)-H + 5'-deoxyadenosine + L-methionine + A + S-adenosyl-L-homocysteine + 2 H(+)</text>
        <dbReference type="Rhea" id="RHEA:37087"/>
        <dbReference type="Rhea" id="RHEA-COMP:10460"/>
        <dbReference type="Rhea" id="RHEA-COMP:10461"/>
        <dbReference type="Rhea" id="RHEA-COMP:14737"/>
        <dbReference type="Rhea" id="RHEA-COMP:14739"/>
        <dbReference type="ChEBI" id="CHEBI:13193"/>
        <dbReference type="ChEBI" id="CHEBI:15378"/>
        <dbReference type="ChEBI" id="CHEBI:17319"/>
        <dbReference type="ChEBI" id="CHEBI:17499"/>
        <dbReference type="ChEBI" id="CHEBI:29917"/>
        <dbReference type="ChEBI" id="CHEBI:29961"/>
        <dbReference type="ChEBI" id="CHEBI:57844"/>
        <dbReference type="ChEBI" id="CHEBI:57856"/>
        <dbReference type="ChEBI" id="CHEBI:59789"/>
        <dbReference type="ChEBI" id="CHEBI:64428"/>
        <dbReference type="ChEBI" id="CHEBI:73599"/>
        <dbReference type="EC" id="2.8.4.4"/>
    </reaction>
</comment>
<comment type="cofactor">
    <cofactor evidence="1">
        <name>[4Fe-4S] cluster</name>
        <dbReference type="ChEBI" id="CHEBI:49883"/>
    </cofactor>
    <text evidence="1">Binds 2 [4Fe-4S] clusters. One cluster is coordinated with 3 cysteines and an exchangeable S-adenosyl-L-methionine.</text>
</comment>
<comment type="subcellular location">
    <subcellularLocation>
        <location evidence="1">Cytoplasm</location>
    </subcellularLocation>
</comment>
<comment type="similarity">
    <text evidence="1">Belongs to the methylthiotransferase family. RimO subfamily.</text>
</comment>
<keyword id="KW-0004">4Fe-4S</keyword>
<keyword id="KW-0963">Cytoplasm</keyword>
<keyword id="KW-0408">Iron</keyword>
<keyword id="KW-0411">Iron-sulfur</keyword>
<keyword id="KW-0479">Metal-binding</keyword>
<keyword id="KW-1185">Reference proteome</keyword>
<keyword id="KW-0949">S-adenosyl-L-methionine</keyword>
<keyword id="KW-0808">Transferase</keyword>
<organism>
    <name type="scientific">Desulfosudis oleivorans (strain DSM 6200 / JCM 39069 / Hxd3)</name>
    <name type="common">Desulfococcus oleovorans</name>
    <dbReference type="NCBI Taxonomy" id="96561"/>
    <lineage>
        <taxon>Bacteria</taxon>
        <taxon>Pseudomonadati</taxon>
        <taxon>Thermodesulfobacteriota</taxon>
        <taxon>Desulfobacteria</taxon>
        <taxon>Desulfobacterales</taxon>
        <taxon>Desulfosudaceae</taxon>
        <taxon>Desulfosudis</taxon>
    </lineage>
</organism>
<sequence length="440" mass="47819">MKVHLTSLGCAKNQVDSELMLGAFAAEGLTVCDDPAGADVLVVNTCAFIEDAVNEAVDTILALARYKSEGSCRRLIVCGCLPERFGEELAGALPEADFFFGTGAYHRVIEAVAGKESTLSRCTLPPPDAVPMQAAADRRICATPHTVYVKIAEGCDRRCTYCIIPRLRGRQRSRPPADIVVEARGLVAAGAKELVLVAQETTAYGADLSPPVSLASLLMALSDAVGDIWVRVLYMHPDTMDPDLIRVMTERDNLCSYFDVPVQHASDRVLKRMGRRHTAADLHRLFDDIRRADPDAVLRTTVLVGFPGEKPADFEKLLDFITGVAFDHLGAFIYSDDEALSSHGLDGHVSSKTARHRYDRVMTAQIDISSRRLAKRVGSREPVLVEEKAEDGLFFGRAWFQAPEVDGDVCFSGAGDYAPGDRVSVRITGASAYDLTGEAQ</sequence>
<gene>
    <name evidence="1" type="primary">rimO</name>
    <name type="ordered locus">Dole_3231</name>
</gene>
<evidence type="ECO:0000255" key="1">
    <source>
        <dbReference type="HAMAP-Rule" id="MF_01865"/>
    </source>
</evidence>
<evidence type="ECO:0000255" key="2">
    <source>
        <dbReference type="PROSITE-ProRule" id="PRU01266"/>
    </source>
</evidence>
<reference key="1">
    <citation type="submission" date="2007-10" db="EMBL/GenBank/DDBJ databases">
        <title>Complete sequence of Desulfococcus oleovorans Hxd3.</title>
        <authorList>
            <consortium name="US DOE Joint Genome Institute"/>
            <person name="Copeland A."/>
            <person name="Lucas S."/>
            <person name="Lapidus A."/>
            <person name="Barry K."/>
            <person name="Glavina del Rio T."/>
            <person name="Dalin E."/>
            <person name="Tice H."/>
            <person name="Pitluck S."/>
            <person name="Kiss H."/>
            <person name="Brettin T."/>
            <person name="Bruce D."/>
            <person name="Detter J.C."/>
            <person name="Han C."/>
            <person name="Schmutz J."/>
            <person name="Larimer F."/>
            <person name="Land M."/>
            <person name="Hauser L."/>
            <person name="Kyrpides N."/>
            <person name="Kim E."/>
            <person name="Wawrik B."/>
            <person name="Richardson P."/>
        </authorList>
    </citation>
    <scope>NUCLEOTIDE SEQUENCE [LARGE SCALE GENOMIC DNA]</scope>
    <source>
        <strain>DSM 6200 / JCM 39069 / Hxd3</strain>
    </source>
</reference>
<name>RIMO_DESOH</name>
<accession>A9A0B5</accession>
<feature type="chain" id="PRO_0000374803" description="Ribosomal protein uS12 methylthiotransferase RimO">
    <location>
        <begin position="1"/>
        <end position="440"/>
    </location>
</feature>
<feature type="domain" description="MTTase N-terminal" evidence="1">
    <location>
        <begin position="1"/>
        <end position="117"/>
    </location>
</feature>
<feature type="domain" description="Radical SAM core" evidence="2">
    <location>
        <begin position="141"/>
        <end position="371"/>
    </location>
</feature>
<feature type="domain" description="TRAM" evidence="1">
    <location>
        <begin position="374"/>
        <end position="440"/>
    </location>
</feature>
<feature type="binding site" evidence="1">
    <location>
        <position position="10"/>
    </location>
    <ligand>
        <name>[4Fe-4S] cluster</name>
        <dbReference type="ChEBI" id="CHEBI:49883"/>
        <label>1</label>
    </ligand>
</feature>
<feature type="binding site" evidence="1">
    <location>
        <position position="46"/>
    </location>
    <ligand>
        <name>[4Fe-4S] cluster</name>
        <dbReference type="ChEBI" id="CHEBI:49883"/>
        <label>1</label>
    </ligand>
</feature>
<feature type="binding site" evidence="1">
    <location>
        <position position="80"/>
    </location>
    <ligand>
        <name>[4Fe-4S] cluster</name>
        <dbReference type="ChEBI" id="CHEBI:49883"/>
        <label>1</label>
    </ligand>
</feature>
<feature type="binding site" evidence="1">
    <location>
        <position position="155"/>
    </location>
    <ligand>
        <name>[4Fe-4S] cluster</name>
        <dbReference type="ChEBI" id="CHEBI:49883"/>
        <label>2</label>
        <note>4Fe-4S-S-AdoMet</note>
    </ligand>
</feature>
<feature type="binding site" evidence="1">
    <location>
        <position position="159"/>
    </location>
    <ligand>
        <name>[4Fe-4S] cluster</name>
        <dbReference type="ChEBI" id="CHEBI:49883"/>
        <label>2</label>
        <note>4Fe-4S-S-AdoMet</note>
    </ligand>
</feature>
<feature type="binding site" evidence="1">
    <location>
        <position position="162"/>
    </location>
    <ligand>
        <name>[4Fe-4S] cluster</name>
        <dbReference type="ChEBI" id="CHEBI:49883"/>
        <label>2</label>
        <note>4Fe-4S-S-AdoMet</note>
    </ligand>
</feature>
<dbReference type="EC" id="2.8.4.4" evidence="1"/>
<dbReference type="EMBL" id="CP000859">
    <property type="protein sequence ID" value="ABW69034.1"/>
    <property type="molecule type" value="Genomic_DNA"/>
</dbReference>
<dbReference type="RefSeq" id="WP_012176644.1">
    <property type="nucleotide sequence ID" value="NC_009943.1"/>
</dbReference>
<dbReference type="SMR" id="A9A0B5"/>
<dbReference type="STRING" id="96561.Dole_3231"/>
<dbReference type="KEGG" id="dol:Dole_3231"/>
<dbReference type="eggNOG" id="COG0621">
    <property type="taxonomic scope" value="Bacteria"/>
</dbReference>
<dbReference type="HOGENOM" id="CLU_018697_0_1_7"/>
<dbReference type="OrthoDB" id="9805215at2"/>
<dbReference type="Proteomes" id="UP000008561">
    <property type="component" value="Chromosome"/>
</dbReference>
<dbReference type="GO" id="GO:0005829">
    <property type="term" value="C:cytosol"/>
    <property type="evidence" value="ECO:0007669"/>
    <property type="project" value="TreeGrafter"/>
</dbReference>
<dbReference type="GO" id="GO:0051539">
    <property type="term" value="F:4 iron, 4 sulfur cluster binding"/>
    <property type="evidence" value="ECO:0007669"/>
    <property type="project" value="UniProtKB-UniRule"/>
</dbReference>
<dbReference type="GO" id="GO:0035599">
    <property type="term" value="F:aspartic acid methylthiotransferase activity"/>
    <property type="evidence" value="ECO:0007669"/>
    <property type="project" value="TreeGrafter"/>
</dbReference>
<dbReference type="GO" id="GO:0046872">
    <property type="term" value="F:metal ion binding"/>
    <property type="evidence" value="ECO:0007669"/>
    <property type="project" value="UniProtKB-KW"/>
</dbReference>
<dbReference type="GO" id="GO:0103039">
    <property type="term" value="F:protein methylthiotransferase activity"/>
    <property type="evidence" value="ECO:0007669"/>
    <property type="project" value="UniProtKB-EC"/>
</dbReference>
<dbReference type="GO" id="GO:0006400">
    <property type="term" value="P:tRNA modification"/>
    <property type="evidence" value="ECO:0007669"/>
    <property type="project" value="InterPro"/>
</dbReference>
<dbReference type="CDD" id="cd01335">
    <property type="entry name" value="Radical_SAM"/>
    <property type="match status" value="1"/>
</dbReference>
<dbReference type="FunFam" id="3.80.30.20:FF:000001">
    <property type="entry name" value="tRNA-2-methylthio-N(6)-dimethylallyladenosine synthase 2"/>
    <property type="match status" value="1"/>
</dbReference>
<dbReference type="Gene3D" id="3.40.50.12160">
    <property type="entry name" value="Methylthiotransferase, N-terminal domain"/>
    <property type="match status" value="1"/>
</dbReference>
<dbReference type="Gene3D" id="2.40.50.140">
    <property type="entry name" value="Nucleic acid-binding proteins"/>
    <property type="match status" value="1"/>
</dbReference>
<dbReference type="Gene3D" id="3.80.30.20">
    <property type="entry name" value="tm_1862 like domain"/>
    <property type="match status" value="1"/>
</dbReference>
<dbReference type="HAMAP" id="MF_01865">
    <property type="entry name" value="MTTase_RimO"/>
    <property type="match status" value="1"/>
</dbReference>
<dbReference type="InterPro" id="IPR006638">
    <property type="entry name" value="Elp3/MiaA/NifB-like_rSAM"/>
</dbReference>
<dbReference type="InterPro" id="IPR005839">
    <property type="entry name" value="Methylthiotransferase"/>
</dbReference>
<dbReference type="InterPro" id="IPR020612">
    <property type="entry name" value="Methylthiotransferase_CS"/>
</dbReference>
<dbReference type="InterPro" id="IPR013848">
    <property type="entry name" value="Methylthiotransferase_N"/>
</dbReference>
<dbReference type="InterPro" id="IPR038135">
    <property type="entry name" value="Methylthiotransferase_N_sf"/>
</dbReference>
<dbReference type="InterPro" id="IPR012340">
    <property type="entry name" value="NA-bd_OB-fold"/>
</dbReference>
<dbReference type="InterPro" id="IPR005840">
    <property type="entry name" value="Ribosomal_uS12_MeSTrfase_RimO"/>
</dbReference>
<dbReference type="InterPro" id="IPR007197">
    <property type="entry name" value="rSAM"/>
</dbReference>
<dbReference type="InterPro" id="IPR023404">
    <property type="entry name" value="rSAM_horseshoe"/>
</dbReference>
<dbReference type="InterPro" id="IPR002792">
    <property type="entry name" value="TRAM_dom"/>
</dbReference>
<dbReference type="NCBIfam" id="TIGR01125">
    <property type="entry name" value="30S ribosomal protein S12 methylthiotransferase RimO"/>
    <property type="match status" value="1"/>
</dbReference>
<dbReference type="NCBIfam" id="TIGR00089">
    <property type="entry name" value="MiaB/RimO family radical SAM methylthiotransferase"/>
    <property type="match status" value="1"/>
</dbReference>
<dbReference type="PANTHER" id="PTHR43837">
    <property type="entry name" value="RIBOSOMAL PROTEIN S12 METHYLTHIOTRANSFERASE RIMO"/>
    <property type="match status" value="1"/>
</dbReference>
<dbReference type="PANTHER" id="PTHR43837:SF1">
    <property type="entry name" value="RIBOSOMAL PROTEIN US12 METHYLTHIOTRANSFERASE RIMO"/>
    <property type="match status" value="1"/>
</dbReference>
<dbReference type="Pfam" id="PF04055">
    <property type="entry name" value="Radical_SAM"/>
    <property type="match status" value="1"/>
</dbReference>
<dbReference type="Pfam" id="PF18693">
    <property type="entry name" value="TRAM_2"/>
    <property type="match status" value="1"/>
</dbReference>
<dbReference type="Pfam" id="PF00919">
    <property type="entry name" value="UPF0004"/>
    <property type="match status" value="1"/>
</dbReference>
<dbReference type="SFLD" id="SFLDG01082">
    <property type="entry name" value="B12-binding_domain_containing"/>
    <property type="match status" value="1"/>
</dbReference>
<dbReference type="SFLD" id="SFLDS00029">
    <property type="entry name" value="Radical_SAM"/>
    <property type="match status" value="1"/>
</dbReference>
<dbReference type="SFLD" id="SFLDF00274">
    <property type="entry name" value="ribosomal_protein_S12_methylth"/>
    <property type="match status" value="1"/>
</dbReference>
<dbReference type="SMART" id="SM00729">
    <property type="entry name" value="Elp3"/>
    <property type="match status" value="1"/>
</dbReference>
<dbReference type="SUPFAM" id="SSF102114">
    <property type="entry name" value="Radical SAM enzymes"/>
    <property type="match status" value="1"/>
</dbReference>
<dbReference type="PROSITE" id="PS51449">
    <property type="entry name" value="MTTASE_N"/>
    <property type="match status" value="1"/>
</dbReference>
<dbReference type="PROSITE" id="PS01278">
    <property type="entry name" value="MTTASE_RADICAL"/>
    <property type="match status" value="1"/>
</dbReference>
<dbReference type="PROSITE" id="PS51918">
    <property type="entry name" value="RADICAL_SAM"/>
    <property type="match status" value="1"/>
</dbReference>
<dbReference type="PROSITE" id="PS50926">
    <property type="entry name" value="TRAM"/>
    <property type="match status" value="1"/>
</dbReference>
<proteinExistence type="inferred from homology"/>